<protein>
    <recommendedName>
        <fullName>3-ketodihydrosphingosine reductase TSC10</fullName>
        <ecNumber evidence="4">1.1.1.102</ecNumber>
    </recommendedName>
    <alternativeName>
        <fullName>3-dehydrosphinganine reductase</fullName>
    </alternativeName>
    <alternativeName>
        <fullName>KDS reductase</fullName>
    </alternativeName>
</protein>
<keyword id="KW-0256">Endoplasmic reticulum</keyword>
<keyword id="KW-0443">Lipid metabolism</keyword>
<keyword id="KW-0472">Membrane</keyword>
<keyword id="KW-0521">NADP</keyword>
<keyword id="KW-0547">Nucleotide-binding</keyword>
<keyword id="KW-0560">Oxidoreductase</keyword>
<keyword id="KW-1185">Reference proteome</keyword>
<keyword id="KW-0746">Sphingolipid metabolism</keyword>
<keyword id="KW-0812">Transmembrane</keyword>
<keyword id="KW-1133">Transmembrane helix</keyword>
<proteinExistence type="inferred from homology"/>
<name>KDSR_DEBHA</name>
<evidence type="ECO:0000250" key="1">
    <source>
        <dbReference type="UniProtKB" id="L0E2Z4"/>
    </source>
</evidence>
<evidence type="ECO:0000250" key="2">
    <source>
        <dbReference type="UniProtKB" id="O93868"/>
    </source>
</evidence>
<evidence type="ECO:0000250" key="3">
    <source>
        <dbReference type="UniProtKB" id="P0CR36"/>
    </source>
</evidence>
<evidence type="ECO:0000250" key="4">
    <source>
        <dbReference type="UniProtKB" id="P38342"/>
    </source>
</evidence>
<evidence type="ECO:0000250" key="5">
    <source>
        <dbReference type="UniProtKB" id="P40471"/>
    </source>
</evidence>
<evidence type="ECO:0000255" key="6"/>
<evidence type="ECO:0000305" key="7"/>
<comment type="function">
    <text evidence="4">Catalyzes the reduction of 3'-oxosphinganine (3-ketodihydrosphingosine/KDS) to sphinganine (dihydrosphingosine/DHS), the second step of de novo sphingolipid biosynthesis.</text>
</comment>
<comment type="catalytic activity">
    <reaction evidence="4">
        <text>sphinganine + NADP(+) = 3-oxosphinganine + NADPH + H(+)</text>
        <dbReference type="Rhea" id="RHEA:22640"/>
        <dbReference type="ChEBI" id="CHEBI:15378"/>
        <dbReference type="ChEBI" id="CHEBI:57783"/>
        <dbReference type="ChEBI" id="CHEBI:57817"/>
        <dbReference type="ChEBI" id="CHEBI:58299"/>
        <dbReference type="ChEBI" id="CHEBI:58349"/>
        <dbReference type="EC" id="1.1.1.102"/>
    </reaction>
    <physiologicalReaction direction="right-to-left" evidence="4">
        <dbReference type="Rhea" id="RHEA:22642"/>
    </physiologicalReaction>
</comment>
<comment type="pathway">
    <text>Lipid metabolism; sphingolipid metabolism.</text>
</comment>
<comment type="subcellular location">
    <subcellularLocation>
        <location evidence="4">Endoplasmic reticulum membrane</location>
        <topology evidence="7">Single-pass membrane protein</topology>
    </subcellularLocation>
</comment>
<comment type="similarity">
    <text evidence="7">Belongs to the short-chain dehydrogenases/reductases (SDR) family.</text>
</comment>
<organism>
    <name type="scientific">Debaryomyces hansenii (strain ATCC 36239 / CBS 767 / BCRC 21394 / JCM 1990 / NBRC 0083 / IGC 2968)</name>
    <name type="common">Yeast</name>
    <name type="synonym">Torulaspora hansenii</name>
    <dbReference type="NCBI Taxonomy" id="284592"/>
    <lineage>
        <taxon>Eukaryota</taxon>
        <taxon>Fungi</taxon>
        <taxon>Dikarya</taxon>
        <taxon>Ascomycota</taxon>
        <taxon>Saccharomycotina</taxon>
        <taxon>Pichiomycetes</taxon>
        <taxon>Debaryomycetaceae</taxon>
        <taxon>Debaryomyces</taxon>
    </lineage>
</organism>
<feature type="chain" id="PRO_0000054795" description="3-ketodihydrosphingosine reductase TSC10">
    <location>
        <begin position="1"/>
        <end position="328"/>
    </location>
</feature>
<feature type="transmembrane region" description="Helical" evidence="6">
    <location>
        <begin position="277"/>
        <end position="297"/>
    </location>
</feature>
<feature type="short sequence motif" description="GXSXG" evidence="5">
    <location>
        <begin position="19"/>
        <end position="23"/>
    </location>
</feature>
<feature type="active site" description="Proton donor" evidence="2">
    <location>
        <position position="161"/>
    </location>
</feature>
<feature type="active site" description="Proton acceptor" evidence="2">
    <location>
        <position position="175"/>
    </location>
</feature>
<feature type="active site" description="Lowers pKa of active site Tyr" evidence="2">
    <location>
        <position position="179"/>
    </location>
</feature>
<feature type="binding site" evidence="1">
    <location>
        <position position="16"/>
    </location>
    <ligand>
        <name>NADP(+)</name>
        <dbReference type="ChEBI" id="CHEBI:58349"/>
    </ligand>
</feature>
<feature type="binding site" evidence="3">
    <location>
        <position position="19"/>
    </location>
    <ligand>
        <name>NADPH</name>
        <dbReference type="ChEBI" id="CHEBI:57783"/>
    </ligand>
</feature>
<feature type="binding site" evidence="3">
    <location>
        <position position="21"/>
    </location>
    <ligand>
        <name>NADPH</name>
        <dbReference type="ChEBI" id="CHEBI:57783"/>
    </ligand>
</feature>
<feature type="binding site" evidence="3">
    <location>
        <position position="23"/>
    </location>
    <ligand>
        <name>NADPH</name>
        <dbReference type="ChEBI" id="CHEBI:57783"/>
    </ligand>
</feature>
<feature type="binding site" evidence="1">
    <location>
        <position position="24"/>
    </location>
    <ligand>
        <name>NADP(+)</name>
        <dbReference type="ChEBI" id="CHEBI:58349"/>
    </ligand>
</feature>
<feature type="binding site" evidence="3">
    <location>
        <position position="44"/>
    </location>
    <ligand>
        <name>NADPH</name>
        <dbReference type="ChEBI" id="CHEBI:57783"/>
    </ligand>
</feature>
<feature type="binding site" evidence="3">
    <location>
        <position position="48"/>
    </location>
    <ligand>
        <name>NADPH</name>
        <dbReference type="ChEBI" id="CHEBI:57783"/>
    </ligand>
</feature>
<feature type="binding site" evidence="1">
    <location>
        <position position="73"/>
    </location>
    <ligand>
        <name>NADP(+)</name>
        <dbReference type="ChEBI" id="CHEBI:58349"/>
    </ligand>
</feature>
<feature type="binding site" evidence="3">
    <location>
        <position position="73"/>
    </location>
    <ligand>
        <name>NADPH</name>
        <dbReference type="ChEBI" id="CHEBI:57783"/>
    </ligand>
</feature>
<feature type="binding site" evidence="2">
    <location>
        <position position="175"/>
    </location>
    <ligand>
        <name>NADP(+)</name>
        <dbReference type="ChEBI" id="CHEBI:58349"/>
    </ligand>
</feature>
<feature type="binding site" evidence="2">
    <location>
        <position position="179"/>
    </location>
    <ligand>
        <name>NADP(+)</name>
        <dbReference type="ChEBI" id="CHEBI:58349"/>
    </ligand>
</feature>
<feature type="binding site" evidence="1">
    <location>
        <position position="210"/>
    </location>
    <ligand>
        <name>NADP(+)</name>
        <dbReference type="ChEBI" id="CHEBI:58349"/>
    </ligand>
</feature>
<gene>
    <name type="primary">TSC10</name>
    <name type="ordered locus">DEHA2E04576g</name>
</gene>
<accession>Q6BQK1</accession>
<reference key="1">
    <citation type="journal article" date="2004" name="Nature">
        <title>Genome evolution in yeasts.</title>
        <authorList>
            <person name="Dujon B."/>
            <person name="Sherman D."/>
            <person name="Fischer G."/>
            <person name="Durrens P."/>
            <person name="Casaregola S."/>
            <person name="Lafontaine I."/>
            <person name="de Montigny J."/>
            <person name="Marck C."/>
            <person name="Neuveglise C."/>
            <person name="Talla E."/>
            <person name="Goffard N."/>
            <person name="Frangeul L."/>
            <person name="Aigle M."/>
            <person name="Anthouard V."/>
            <person name="Babour A."/>
            <person name="Barbe V."/>
            <person name="Barnay S."/>
            <person name="Blanchin S."/>
            <person name="Beckerich J.-M."/>
            <person name="Beyne E."/>
            <person name="Bleykasten C."/>
            <person name="Boisrame A."/>
            <person name="Boyer J."/>
            <person name="Cattolico L."/>
            <person name="Confanioleri F."/>
            <person name="de Daruvar A."/>
            <person name="Despons L."/>
            <person name="Fabre E."/>
            <person name="Fairhead C."/>
            <person name="Ferry-Dumazet H."/>
            <person name="Groppi A."/>
            <person name="Hantraye F."/>
            <person name="Hennequin C."/>
            <person name="Jauniaux N."/>
            <person name="Joyet P."/>
            <person name="Kachouri R."/>
            <person name="Kerrest A."/>
            <person name="Koszul R."/>
            <person name="Lemaire M."/>
            <person name="Lesur I."/>
            <person name="Ma L."/>
            <person name="Muller H."/>
            <person name="Nicaud J.-M."/>
            <person name="Nikolski M."/>
            <person name="Oztas S."/>
            <person name="Ozier-Kalogeropoulos O."/>
            <person name="Pellenz S."/>
            <person name="Potier S."/>
            <person name="Richard G.-F."/>
            <person name="Straub M.-L."/>
            <person name="Suleau A."/>
            <person name="Swennen D."/>
            <person name="Tekaia F."/>
            <person name="Wesolowski-Louvel M."/>
            <person name="Westhof E."/>
            <person name="Wirth B."/>
            <person name="Zeniou-Meyer M."/>
            <person name="Zivanovic Y."/>
            <person name="Bolotin-Fukuhara M."/>
            <person name="Thierry A."/>
            <person name="Bouchier C."/>
            <person name="Caudron B."/>
            <person name="Scarpelli C."/>
            <person name="Gaillardin C."/>
            <person name="Weissenbach J."/>
            <person name="Wincker P."/>
            <person name="Souciet J.-L."/>
        </authorList>
    </citation>
    <scope>NUCLEOTIDE SEQUENCE [LARGE SCALE GENOMIC DNA]</scope>
    <source>
        <strain>ATCC 36239 / CBS 767 / BCRC 21394 / JCM 1990 / NBRC 0083 / IGC 2968</strain>
    </source>
</reference>
<sequence>MLFSNNKIHAEGKLALIVGASQGLGADLALKLYQQNCSVILVARTETKLVAQIERIQSSSPENNATLSYKCCDASNYEDCVKLWNDLIVDQKQDPDFIFCCAGSSIPKLFSDLTAKDFAIGINTNYTTSLNITHTGFKQVLGQFSDLSCDQYKKRHVIFVSSVVSFYPFIGYSQYAPLKSAIQSLSIILRQEMGPFNYRVSCVFPGNFQSEGYEEEQKTKPSITKSIEGSSKPISGEDCADIILNQLNRGYDTVTTDFIGWLLGCSVLGVLPRSWGFFQVIVSFIFSIIAPIANYVVYRDVLKFFKTRSTREVEEYEIVSTDDNKKTL</sequence>
<dbReference type="EC" id="1.1.1.102" evidence="4"/>
<dbReference type="EMBL" id="CR382137">
    <property type="protein sequence ID" value="CAG87745.2"/>
    <property type="molecule type" value="Genomic_DNA"/>
</dbReference>
<dbReference type="RefSeq" id="XP_459519.2">
    <property type="nucleotide sequence ID" value="XM_459519.1"/>
</dbReference>
<dbReference type="SMR" id="Q6BQK1"/>
<dbReference type="FunCoup" id="Q6BQK1">
    <property type="interactions" value="127"/>
</dbReference>
<dbReference type="STRING" id="284592.Q6BQK1"/>
<dbReference type="GeneID" id="2902161"/>
<dbReference type="KEGG" id="dha:DEHA2E04576g"/>
<dbReference type="VEuPathDB" id="FungiDB:DEHA2E04576g"/>
<dbReference type="eggNOG" id="KOG1210">
    <property type="taxonomic scope" value="Eukaryota"/>
</dbReference>
<dbReference type="HOGENOM" id="CLU_010194_3_0_1"/>
<dbReference type="InParanoid" id="Q6BQK1"/>
<dbReference type="OMA" id="ICGVFEE"/>
<dbReference type="OrthoDB" id="10267115at2759"/>
<dbReference type="UniPathway" id="UPA00222"/>
<dbReference type="Proteomes" id="UP000000599">
    <property type="component" value="Chromosome E"/>
</dbReference>
<dbReference type="GO" id="GO:0005789">
    <property type="term" value="C:endoplasmic reticulum membrane"/>
    <property type="evidence" value="ECO:0007669"/>
    <property type="project" value="UniProtKB-SubCell"/>
</dbReference>
<dbReference type="GO" id="GO:0005811">
    <property type="term" value="C:lipid droplet"/>
    <property type="evidence" value="ECO:0007669"/>
    <property type="project" value="EnsemblFungi"/>
</dbReference>
<dbReference type="GO" id="GO:0047560">
    <property type="term" value="F:3-dehydrosphinganine reductase activity"/>
    <property type="evidence" value="ECO:0000250"/>
    <property type="project" value="UniProtKB"/>
</dbReference>
<dbReference type="GO" id="GO:0070402">
    <property type="term" value="F:NADPH binding"/>
    <property type="evidence" value="ECO:0000250"/>
    <property type="project" value="UniProtKB"/>
</dbReference>
<dbReference type="GO" id="GO:0006666">
    <property type="term" value="P:3-keto-sphinganine metabolic process"/>
    <property type="evidence" value="ECO:0000250"/>
    <property type="project" value="UniProtKB"/>
</dbReference>
<dbReference type="GO" id="GO:0030148">
    <property type="term" value="P:sphingolipid biosynthetic process"/>
    <property type="evidence" value="ECO:0000250"/>
    <property type="project" value="UniProtKB"/>
</dbReference>
<dbReference type="CDD" id="cd08939">
    <property type="entry name" value="KDSR-like_SDR_c"/>
    <property type="match status" value="1"/>
</dbReference>
<dbReference type="FunFam" id="3.40.50.720:FF:000578">
    <property type="entry name" value="3-ketodihydrosphingosine reductase"/>
    <property type="match status" value="1"/>
</dbReference>
<dbReference type="Gene3D" id="3.40.50.720">
    <property type="entry name" value="NAD(P)-binding Rossmann-like Domain"/>
    <property type="match status" value="1"/>
</dbReference>
<dbReference type="InterPro" id="IPR045022">
    <property type="entry name" value="KDSR-like"/>
</dbReference>
<dbReference type="InterPro" id="IPR036291">
    <property type="entry name" value="NAD(P)-bd_dom_sf"/>
</dbReference>
<dbReference type="InterPro" id="IPR002347">
    <property type="entry name" value="SDR_fam"/>
</dbReference>
<dbReference type="PANTHER" id="PTHR43550">
    <property type="entry name" value="3-KETODIHYDROSPHINGOSINE REDUCTASE"/>
    <property type="match status" value="1"/>
</dbReference>
<dbReference type="PANTHER" id="PTHR43550:SF3">
    <property type="entry name" value="3-KETODIHYDROSPHINGOSINE REDUCTASE"/>
    <property type="match status" value="1"/>
</dbReference>
<dbReference type="Pfam" id="PF00106">
    <property type="entry name" value="adh_short"/>
    <property type="match status" value="1"/>
</dbReference>
<dbReference type="PRINTS" id="PR00081">
    <property type="entry name" value="GDHRDH"/>
</dbReference>
<dbReference type="SUPFAM" id="SSF51735">
    <property type="entry name" value="NAD(P)-binding Rossmann-fold domains"/>
    <property type="match status" value="1"/>
</dbReference>